<dbReference type="EMBL" id="AF233875">
    <property type="protein sequence ID" value="AAF79942.1"/>
    <property type="molecule type" value="Genomic_DNA"/>
</dbReference>
<dbReference type="EMBL" id="BC162428">
    <property type="protein sequence ID" value="AAI62428.1"/>
    <property type="molecule type" value="mRNA"/>
</dbReference>
<dbReference type="EMBL" id="BC162436">
    <property type="protein sequence ID" value="AAI62436.1"/>
    <property type="molecule type" value="mRNA"/>
</dbReference>
<dbReference type="RefSeq" id="NP_001157843.1">
    <property type="nucleotide sequence ID" value="NM_001164371.1"/>
</dbReference>
<dbReference type="RefSeq" id="NP_571091.1">
    <property type="nucleotide sequence ID" value="NM_131016.2"/>
</dbReference>
<dbReference type="FunCoup" id="Q9I8P2">
    <property type="interactions" value="613"/>
</dbReference>
<dbReference type="STRING" id="7955.ENSDARP00000108040"/>
<dbReference type="TCDB" id="8.A.106.2.1">
    <property type="family name" value="the caltrin/peptide yy (caltrin) family"/>
</dbReference>
<dbReference type="PaxDb" id="7955-ENSDARP00000108040"/>
<dbReference type="Ensembl" id="ENSDART00000128786">
    <property type="protein sequence ID" value="ENSDARP00000108040"/>
    <property type="gene ID" value="ENSDARG00000053449"/>
</dbReference>
<dbReference type="Ensembl" id="ENSDART00000186352">
    <property type="protein sequence ID" value="ENSDARP00000152843"/>
    <property type="gene ID" value="ENSDARG00000053449"/>
</dbReference>
<dbReference type="GeneID" id="30211"/>
<dbReference type="KEGG" id="dre:30211"/>
<dbReference type="AGR" id="ZFIN:ZDB-GENE-980526-71"/>
<dbReference type="CTD" id="30211"/>
<dbReference type="ZFIN" id="ZDB-GENE-980526-71">
    <property type="gene designation" value="pyya"/>
</dbReference>
<dbReference type="eggNOG" id="ENOG502S267">
    <property type="taxonomic scope" value="Eukaryota"/>
</dbReference>
<dbReference type="HOGENOM" id="CLU_162379_1_0_1"/>
<dbReference type="InParanoid" id="Q9I8P2"/>
<dbReference type="OMA" id="DSNRDQR"/>
<dbReference type="OrthoDB" id="9852947at2759"/>
<dbReference type="PhylomeDB" id="Q9I8P2"/>
<dbReference type="TreeFam" id="TF332778"/>
<dbReference type="Reactome" id="R-DRE-375276">
    <property type="pathway name" value="Peptide ligand-binding receptors"/>
</dbReference>
<dbReference type="Reactome" id="R-DRE-418594">
    <property type="pathway name" value="G alpha (i) signalling events"/>
</dbReference>
<dbReference type="PRO" id="PR:Q9I8P2"/>
<dbReference type="Proteomes" id="UP000000437">
    <property type="component" value="Chromosome 3"/>
</dbReference>
<dbReference type="Bgee" id="ENSDARG00000053449">
    <property type="expression patterns" value="Expressed in brain and 12 other cell types or tissues"/>
</dbReference>
<dbReference type="GO" id="GO:0005615">
    <property type="term" value="C:extracellular space"/>
    <property type="evidence" value="ECO:0000318"/>
    <property type="project" value="GO_Central"/>
</dbReference>
<dbReference type="GO" id="GO:0005184">
    <property type="term" value="F:neuropeptide hormone activity"/>
    <property type="evidence" value="ECO:0000318"/>
    <property type="project" value="GO_Central"/>
</dbReference>
<dbReference type="GO" id="GO:0031841">
    <property type="term" value="F:neuropeptide Y receptor binding"/>
    <property type="evidence" value="ECO:0000314"/>
    <property type="project" value="ZFIN"/>
</dbReference>
<dbReference type="GO" id="GO:0031843">
    <property type="term" value="F:type 2 neuropeptide Y receptor binding"/>
    <property type="evidence" value="ECO:0000314"/>
    <property type="project" value="ZFIN"/>
</dbReference>
<dbReference type="GO" id="GO:0007631">
    <property type="term" value="P:feeding behavior"/>
    <property type="evidence" value="ECO:0000318"/>
    <property type="project" value="GO_Central"/>
</dbReference>
<dbReference type="GO" id="GO:0007218">
    <property type="term" value="P:neuropeptide signaling pathway"/>
    <property type="evidence" value="ECO:0000318"/>
    <property type="project" value="GO_Central"/>
</dbReference>
<dbReference type="CDD" id="cd00126">
    <property type="entry name" value="PAH"/>
    <property type="match status" value="1"/>
</dbReference>
<dbReference type="Gene3D" id="6.10.250.900">
    <property type="match status" value="1"/>
</dbReference>
<dbReference type="InterPro" id="IPR001955">
    <property type="entry name" value="Pancreatic_hormone-like"/>
</dbReference>
<dbReference type="InterPro" id="IPR020392">
    <property type="entry name" value="Pancreatic_hormone-like_CS"/>
</dbReference>
<dbReference type="PANTHER" id="PTHR10533">
    <property type="entry name" value="NEUROPEPTIDE Y/PANCREATIC HORMONE/PEPTIDE YY"/>
    <property type="match status" value="1"/>
</dbReference>
<dbReference type="PANTHER" id="PTHR10533:SF14">
    <property type="entry name" value="PEPTIDE YY-RELATED"/>
    <property type="match status" value="1"/>
</dbReference>
<dbReference type="Pfam" id="PF00159">
    <property type="entry name" value="Hormone_3"/>
    <property type="match status" value="1"/>
</dbReference>
<dbReference type="PRINTS" id="PR00278">
    <property type="entry name" value="PANCHORMONE"/>
</dbReference>
<dbReference type="SMART" id="SM00309">
    <property type="entry name" value="PAH"/>
    <property type="match status" value="1"/>
</dbReference>
<dbReference type="PROSITE" id="PS00265">
    <property type="entry name" value="PANCREATIC_HORMONE_1"/>
    <property type="match status" value="1"/>
</dbReference>
<dbReference type="PROSITE" id="PS50276">
    <property type="entry name" value="PANCREATIC_HORMONE_2"/>
    <property type="match status" value="1"/>
</dbReference>
<gene>
    <name type="primary">pyya</name>
    <name type="synonym">pyy</name>
</gene>
<evidence type="ECO:0000250" key="1"/>
<evidence type="ECO:0000255" key="2"/>
<evidence type="ECO:0000269" key="3">
    <source>
    </source>
</evidence>
<evidence type="ECO:0000305" key="4"/>
<feature type="signal peptide" evidence="2">
    <location>
        <begin position="1"/>
        <end position="28"/>
    </location>
</feature>
<feature type="peptide" id="PRO_0000025395" description="Peptide YY-A">
    <location>
        <begin position="29"/>
        <end position="64"/>
    </location>
</feature>
<feature type="propeptide" id="PRO_0000025396" description="C-terminal extension" evidence="1">
    <location>
        <begin position="68"/>
        <end position="97"/>
    </location>
</feature>
<feature type="modified residue" description="Tyrosine amide" evidence="2">
    <location>
        <position position="64"/>
    </location>
</feature>
<protein>
    <recommendedName>
        <fullName>Peptide YY-A</fullName>
    </recommendedName>
    <alternativeName>
        <fullName>Peptide YY</fullName>
    </alternativeName>
    <alternativeName>
        <fullName>Peptide YYa</fullName>
    </alternativeName>
</protein>
<comment type="subcellular location">
    <subcellularLocation>
        <location>Secreted</location>
    </subcellularLocation>
</comment>
<comment type="tissue specificity">
    <text evidence="3">Mainly expressed in brainstem neurons, and in the telencephalon. Also expressed in intestinal endocrine cells.</text>
</comment>
<comment type="similarity">
    <text evidence="4">Belongs to the NPY family.</text>
</comment>
<keyword id="KW-0027">Amidation</keyword>
<keyword id="KW-0165">Cleavage on pair of basic residues</keyword>
<keyword id="KW-0372">Hormone</keyword>
<keyword id="KW-0527">Neuropeptide</keyword>
<keyword id="KW-1185">Reference proteome</keyword>
<keyword id="KW-0964">Secreted</keyword>
<keyword id="KW-0732">Signal</keyword>
<proteinExistence type="evidence at transcript level"/>
<reference key="1">
    <citation type="journal article" date="2000" name="J. Neurochem.">
        <title>Zebrafish genes for neuropeptide Y and peptide YY reveal origin by chromosome duplication from an ancestral gene linked to the homeobox cluster.</title>
        <authorList>
            <person name="Soederberg C."/>
            <person name="Wraith A."/>
            <person name="Ringvall M."/>
            <person name="Yan Y.-L."/>
            <person name="Postlethwait J.H."/>
            <person name="Brodin L."/>
            <person name="Larhammar D."/>
        </authorList>
    </citation>
    <scope>NUCLEOTIDE SEQUENCE [GENOMIC DNA]</scope>
    <scope>TISSUE SPECIFICITY</scope>
</reference>
<reference key="2">
    <citation type="submission" date="2008-04" db="EMBL/GenBank/DDBJ databases">
        <authorList>
            <consortium name="NIH - Zebrafish Gene Collection (ZGC) project"/>
        </authorList>
    </citation>
    <scope>NUCLEOTIDE SEQUENCE [LARGE SCALE MRNA]</scope>
</reference>
<accession>Q9I8P2</accession>
<accession>B3DGK4</accession>
<organism>
    <name type="scientific">Danio rerio</name>
    <name type="common">Zebrafish</name>
    <name type="synonym">Brachydanio rerio</name>
    <dbReference type="NCBI Taxonomy" id="7955"/>
    <lineage>
        <taxon>Eukaryota</taxon>
        <taxon>Metazoa</taxon>
        <taxon>Chordata</taxon>
        <taxon>Craniata</taxon>
        <taxon>Vertebrata</taxon>
        <taxon>Euteleostomi</taxon>
        <taxon>Actinopterygii</taxon>
        <taxon>Neopterygii</taxon>
        <taxon>Teleostei</taxon>
        <taxon>Ostariophysi</taxon>
        <taxon>Cypriniformes</taxon>
        <taxon>Danionidae</taxon>
        <taxon>Danioninae</taxon>
        <taxon>Danio</taxon>
    </lineage>
</organism>
<name>PYYA_DANRE</name>
<sequence>MAVMLKPWTVVATVLICVLLCLGTFVDAYPPKPENPGDDAAPEELAKYYTALRHYINLITRQRYGKRSTSEDVMAELLFGDDTEHKQRSRYDDSFMW</sequence>